<sequence length="295" mass="31673">MEKKVGTDRVKRGMAQMQKGGVIMDVVNAEQAKIAEEAGAVAVMALERVPSDIRAAGGVARMADPRIVEEVMNAVSIPVMAKARIGHITEARVLEAMGVDYIDESEVLTPADDEFHLLKSDFTVPFVCGCRDIGEALRRIGEGAAMLRTKGEPGTGNIVEAVRHMRQVNGQIRQIAGMTDDELMVAAKNFGAPYELIKEIKTLGKLPVVNFAAGGVATPADAALMMELGADGVFVGSGIFKSDNPAKFASAIVQATTYYTDYELIGKLSKELGSPMKGIEMSRLNPEDRMQDRSI</sequence>
<comment type="function">
    <text evidence="1">Catalyzes the formation of pyridoxal 5'-phosphate from ribose 5-phosphate (RBP), glyceraldehyde 3-phosphate (G3P) and ammonia. The ammonia is provided by the PdxT subunit. Can also use ribulose 5-phosphate and dihydroxyacetone phosphate as substrates, resulting from enzyme-catalyzed isomerization of RBP and G3P, respectively.</text>
</comment>
<comment type="catalytic activity">
    <reaction evidence="1">
        <text>aldehydo-D-ribose 5-phosphate + D-glyceraldehyde 3-phosphate + L-glutamine = pyridoxal 5'-phosphate + L-glutamate + phosphate + 3 H2O + H(+)</text>
        <dbReference type="Rhea" id="RHEA:31507"/>
        <dbReference type="ChEBI" id="CHEBI:15377"/>
        <dbReference type="ChEBI" id="CHEBI:15378"/>
        <dbReference type="ChEBI" id="CHEBI:29985"/>
        <dbReference type="ChEBI" id="CHEBI:43474"/>
        <dbReference type="ChEBI" id="CHEBI:58273"/>
        <dbReference type="ChEBI" id="CHEBI:58359"/>
        <dbReference type="ChEBI" id="CHEBI:59776"/>
        <dbReference type="ChEBI" id="CHEBI:597326"/>
        <dbReference type="EC" id="4.3.3.6"/>
    </reaction>
</comment>
<comment type="pathway">
    <text evidence="1">Cofactor biosynthesis; pyridoxal 5'-phosphate biosynthesis.</text>
</comment>
<comment type="subunit">
    <text evidence="1">In the presence of PdxT, forms a dodecamer of heterodimers.</text>
</comment>
<comment type="similarity">
    <text evidence="1">Belongs to the PdxS/SNZ family.</text>
</comment>
<dbReference type="EC" id="4.3.3.6" evidence="1"/>
<dbReference type="EMBL" id="CP001175">
    <property type="protein sequence ID" value="ACK38805.1"/>
    <property type="molecule type" value="Genomic_DNA"/>
</dbReference>
<dbReference type="RefSeq" id="WP_003728355.1">
    <property type="nucleotide sequence ID" value="NC_011660.1"/>
</dbReference>
<dbReference type="SMR" id="B8DH17"/>
<dbReference type="GeneID" id="93240004"/>
<dbReference type="KEGG" id="lmh:LMHCC_0448"/>
<dbReference type="HOGENOM" id="CLU_055352_1_0_9"/>
<dbReference type="UniPathway" id="UPA00245"/>
<dbReference type="GO" id="GO:0036381">
    <property type="term" value="F:pyridoxal 5'-phosphate synthase (glutamine hydrolysing) activity"/>
    <property type="evidence" value="ECO:0007669"/>
    <property type="project" value="UniProtKB-UniRule"/>
</dbReference>
<dbReference type="GO" id="GO:0006520">
    <property type="term" value="P:amino acid metabolic process"/>
    <property type="evidence" value="ECO:0007669"/>
    <property type="project" value="TreeGrafter"/>
</dbReference>
<dbReference type="GO" id="GO:0042823">
    <property type="term" value="P:pyridoxal phosphate biosynthetic process"/>
    <property type="evidence" value="ECO:0007669"/>
    <property type="project" value="UniProtKB-UniRule"/>
</dbReference>
<dbReference type="GO" id="GO:0008615">
    <property type="term" value="P:pyridoxine biosynthetic process"/>
    <property type="evidence" value="ECO:0007669"/>
    <property type="project" value="TreeGrafter"/>
</dbReference>
<dbReference type="CDD" id="cd04727">
    <property type="entry name" value="pdxS"/>
    <property type="match status" value="1"/>
</dbReference>
<dbReference type="FunFam" id="3.20.20.70:FF:000001">
    <property type="entry name" value="Pyridoxine biosynthesis protein PDX1"/>
    <property type="match status" value="1"/>
</dbReference>
<dbReference type="Gene3D" id="3.20.20.70">
    <property type="entry name" value="Aldolase class I"/>
    <property type="match status" value="1"/>
</dbReference>
<dbReference type="HAMAP" id="MF_01824">
    <property type="entry name" value="PdxS"/>
    <property type="match status" value="1"/>
</dbReference>
<dbReference type="InterPro" id="IPR013785">
    <property type="entry name" value="Aldolase_TIM"/>
</dbReference>
<dbReference type="InterPro" id="IPR001852">
    <property type="entry name" value="PdxS/SNZ"/>
</dbReference>
<dbReference type="InterPro" id="IPR033755">
    <property type="entry name" value="PdxS/SNZ_N"/>
</dbReference>
<dbReference type="InterPro" id="IPR011060">
    <property type="entry name" value="RibuloseP-bd_barrel"/>
</dbReference>
<dbReference type="NCBIfam" id="NF003215">
    <property type="entry name" value="PRK04180.1"/>
    <property type="match status" value="1"/>
</dbReference>
<dbReference type="NCBIfam" id="TIGR00343">
    <property type="entry name" value="pyridoxal 5'-phosphate synthase lyase subunit PdxS"/>
    <property type="match status" value="1"/>
</dbReference>
<dbReference type="PANTHER" id="PTHR31829">
    <property type="entry name" value="PYRIDOXAL 5'-PHOSPHATE SYNTHASE SUBUNIT SNZ1-RELATED"/>
    <property type="match status" value="1"/>
</dbReference>
<dbReference type="PANTHER" id="PTHR31829:SF0">
    <property type="entry name" value="PYRIDOXAL 5'-PHOSPHATE SYNTHASE SUBUNIT SNZ1-RELATED"/>
    <property type="match status" value="1"/>
</dbReference>
<dbReference type="Pfam" id="PF01680">
    <property type="entry name" value="SOR_SNZ"/>
    <property type="match status" value="1"/>
</dbReference>
<dbReference type="PIRSF" id="PIRSF029271">
    <property type="entry name" value="Pdx1"/>
    <property type="match status" value="1"/>
</dbReference>
<dbReference type="SUPFAM" id="SSF51366">
    <property type="entry name" value="Ribulose-phoshate binding barrel"/>
    <property type="match status" value="1"/>
</dbReference>
<dbReference type="PROSITE" id="PS01235">
    <property type="entry name" value="PDXS_SNZ_1"/>
    <property type="match status" value="1"/>
</dbReference>
<dbReference type="PROSITE" id="PS51129">
    <property type="entry name" value="PDXS_SNZ_2"/>
    <property type="match status" value="1"/>
</dbReference>
<gene>
    <name evidence="1" type="primary">pdxS</name>
    <name type="ordered locus">LMHCC_0448</name>
</gene>
<keyword id="KW-0456">Lyase</keyword>
<keyword id="KW-0663">Pyridoxal phosphate</keyword>
<keyword id="KW-0704">Schiff base</keyword>
<feature type="chain" id="PRO_1000188232" description="Pyridoxal 5'-phosphate synthase subunit PdxS">
    <location>
        <begin position="1"/>
        <end position="295"/>
    </location>
</feature>
<feature type="active site" description="Schiff-base intermediate with D-ribose 5-phosphate" evidence="1">
    <location>
        <position position="82"/>
    </location>
</feature>
<feature type="binding site" evidence="1">
    <location>
        <position position="25"/>
    </location>
    <ligand>
        <name>D-ribose 5-phosphate</name>
        <dbReference type="ChEBI" id="CHEBI:78346"/>
    </ligand>
</feature>
<feature type="binding site" evidence="1">
    <location>
        <position position="154"/>
    </location>
    <ligand>
        <name>D-ribose 5-phosphate</name>
        <dbReference type="ChEBI" id="CHEBI:78346"/>
    </ligand>
</feature>
<feature type="binding site" evidence="1">
    <location>
        <position position="166"/>
    </location>
    <ligand>
        <name>D-glyceraldehyde 3-phosphate</name>
        <dbReference type="ChEBI" id="CHEBI:59776"/>
    </ligand>
</feature>
<feature type="binding site" evidence="1">
    <location>
        <position position="215"/>
    </location>
    <ligand>
        <name>D-ribose 5-phosphate</name>
        <dbReference type="ChEBI" id="CHEBI:78346"/>
    </ligand>
</feature>
<feature type="binding site" evidence="1">
    <location>
        <begin position="236"/>
        <end position="237"/>
    </location>
    <ligand>
        <name>D-ribose 5-phosphate</name>
        <dbReference type="ChEBI" id="CHEBI:78346"/>
    </ligand>
</feature>
<accession>B8DH17</accession>
<evidence type="ECO:0000255" key="1">
    <source>
        <dbReference type="HAMAP-Rule" id="MF_01824"/>
    </source>
</evidence>
<proteinExistence type="inferred from homology"/>
<reference key="1">
    <citation type="journal article" date="2011" name="J. Bacteriol.">
        <title>Genome sequence of lineage III Listeria monocytogenes strain HCC23.</title>
        <authorList>
            <person name="Steele C.L."/>
            <person name="Donaldson J.R."/>
            <person name="Paul D."/>
            <person name="Banes M.M."/>
            <person name="Arick T."/>
            <person name="Bridges S.M."/>
            <person name="Lawrence M.L."/>
        </authorList>
    </citation>
    <scope>NUCLEOTIDE SEQUENCE [LARGE SCALE GENOMIC DNA]</scope>
    <source>
        <strain>HCC23</strain>
    </source>
</reference>
<name>PDXS_LISMH</name>
<organism>
    <name type="scientific">Listeria monocytogenes serotype 4a (strain HCC23)</name>
    <dbReference type="NCBI Taxonomy" id="552536"/>
    <lineage>
        <taxon>Bacteria</taxon>
        <taxon>Bacillati</taxon>
        <taxon>Bacillota</taxon>
        <taxon>Bacilli</taxon>
        <taxon>Bacillales</taxon>
        <taxon>Listeriaceae</taxon>
        <taxon>Listeria</taxon>
    </lineage>
</organism>
<protein>
    <recommendedName>
        <fullName evidence="1">Pyridoxal 5'-phosphate synthase subunit PdxS</fullName>
        <shortName evidence="1">PLP synthase subunit PdxS</shortName>
        <ecNumber evidence="1">4.3.3.6</ecNumber>
    </recommendedName>
    <alternativeName>
        <fullName evidence="1">Pdx1</fullName>
    </alternativeName>
</protein>